<dbReference type="EMBL" id="AY263972">
    <property type="protein sequence ID" value="AAP21771.2"/>
    <property type="molecule type" value="Genomic_DNA"/>
</dbReference>
<dbReference type="RefSeq" id="NP_001158063.1">
    <property type="nucleotide sequence ID" value="NM_001164591.1"/>
</dbReference>
<dbReference type="SMR" id="Q863J8"/>
<dbReference type="GlyCosmos" id="Q863J8">
    <property type="glycosylation" value="2 sites, No reported glycans"/>
</dbReference>
<dbReference type="GeneID" id="100303422"/>
<dbReference type="KEGG" id="panu:100303422"/>
<dbReference type="CTD" id="390443"/>
<dbReference type="eggNOG" id="ENOG502TDU6">
    <property type="taxonomic scope" value="Eukaryota"/>
</dbReference>
<dbReference type="OrthoDB" id="13486at314294"/>
<dbReference type="Proteomes" id="UP000028761">
    <property type="component" value="Unplaced"/>
</dbReference>
<dbReference type="GO" id="GO:0005576">
    <property type="term" value="C:extracellular region"/>
    <property type="evidence" value="ECO:0007669"/>
    <property type="project" value="UniProtKB-SubCell"/>
</dbReference>
<dbReference type="GO" id="GO:0003676">
    <property type="term" value="F:nucleic acid binding"/>
    <property type="evidence" value="ECO:0007669"/>
    <property type="project" value="InterPro"/>
</dbReference>
<dbReference type="GO" id="GO:0050830">
    <property type="term" value="P:defense response to Gram-positive bacterium"/>
    <property type="evidence" value="ECO:0007669"/>
    <property type="project" value="TreeGrafter"/>
</dbReference>
<dbReference type="CDD" id="cd00163">
    <property type="entry name" value="RNase_A"/>
    <property type="match status" value="1"/>
</dbReference>
<dbReference type="FunFam" id="3.10.130.10:FF:000003">
    <property type="entry name" value="Inactive ribonuclease-like protein 9"/>
    <property type="match status" value="1"/>
</dbReference>
<dbReference type="Gene3D" id="3.10.130.10">
    <property type="entry name" value="Ribonuclease A-like domain"/>
    <property type="match status" value="1"/>
</dbReference>
<dbReference type="InterPro" id="IPR001427">
    <property type="entry name" value="RNaseA"/>
</dbReference>
<dbReference type="InterPro" id="IPR036816">
    <property type="entry name" value="RNaseA-like_dom_sf"/>
</dbReference>
<dbReference type="InterPro" id="IPR023412">
    <property type="entry name" value="RNaseA_domain"/>
</dbReference>
<dbReference type="PANTHER" id="PTHR11437:SF14">
    <property type="entry name" value="INACTIVE RIBONUCLEASE-LIKE PROTEIN 9"/>
    <property type="match status" value="1"/>
</dbReference>
<dbReference type="PANTHER" id="PTHR11437">
    <property type="entry name" value="RIBONUCLEASE"/>
    <property type="match status" value="1"/>
</dbReference>
<dbReference type="Pfam" id="PF00074">
    <property type="entry name" value="RnaseA"/>
    <property type="match status" value="1"/>
</dbReference>
<dbReference type="SMART" id="SM00092">
    <property type="entry name" value="RNAse_Pc"/>
    <property type="match status" value="1"/>
</dbReference>
<dbReference type="SUPFAM" id="SSF54076">
    <property type="entry name" value="RNase A-like"/>
    <property type="match status" value="1"/>
</dbReference>
<protein>
    <recommendedName>
        <fullName>Inactive ribonuclease-like protein 9</fullName>
    </recommendedName>
</protein>
<gene>
    <name type="primary">RNASE9</name>
</gene>
<accession>Q863J8</accession>
<evidence type="ECO:0000250" key="1"/>
<evidence type="ECO:0000255" key="2"/>
<evidence type="ECO:0000305" key="3"/>
<reference key="1">
    <citation type="submission" date="2003-06" db="EMBL/GenBank/DDBJ databases">
        <title>LOC122650 on chromosome 14q11.2 is related to the RNase A superfamily and contains a unique amino-terminal pre-protein-like domain.</title>
        <authorList>
            <person name="Devor E.J."/>
            <person name="Moffat-Wilson K.A."/>
        </authorList>
    </citation>
    <scope>NUCLEOTIDE SEQUENCE [GENOMIC DNA]</scope>
</reference>
<keyword id="KW-1015">Disulfide bond</keyword>
<keyword id="KW-0325">Glycoprotein</keyword>
<keyword id="KW-1185">Reference proteome</keyword>
<keyword id="KW-0964">Secreted</keyword>
<keyword id="KW-0732">Signal</keyword>
<organism>
    <name type="scientific">Papio anubis</name>
    <name type="common">Olive baboon</name>
    <dbReference type="NCBI Taxonomy" id="9555"/>
    <lineage>
        <taxon>Eukaryota</taxon>
        <taxon>Metazoa</taxon>
        <taxon>Chordata</taxon>
        <taxon>Craniata</taxon>
        <taxon>Vertebrata</taxon>
        <taxon>Euteleostomi</taxon>
        <taxon>Mammalia</taxon>
        <taxon>Eutheria</taxon>
        <taxon>Euarchontoglires</taxon>
        <taxon>Primates</taxon>
        <taxon>Haplorrhini</taxon>
        <taxon>Catarrhini</taxon>
        <taxon>Cercopithecidae</taxon>
        <taxon>Cercopithecinae</taxon>
        <taxon>Papio</taxon>
    </lineage>
</organism>
<feature type="signal peptide" evidence="2">
    <location>
        <begin position="1"/>
        <end position="26"/>
    </location>
</feature>
<feature type="chain" id="PRO_0000030958" description="Inactive ribonuclease-like protein 9">
    <location>
        <begin position="27"/>
        <end position="204"/>
    </location>
</feature>
<feature type="glycosylation site" description="N-linked (GlcNAc...) asparagine" evidence="2">
    <location>
        <position position="130"/>
    </location>
</feature>
<feature type="glycosylation site" description="N-linked (GlcNAc...) asparagine" evidence="2">
    <location>
        <position position="142"/>
    </location>
</feature>
<feature type="disulfide bond" evidence="1">
    <location>
        <begin position="97"/>
        <end position="152"/>
    </location>
</feature>
<feature type="disulfide bond" evidence="1">
    <location>
        <begin position="115"/>
        <end position="167"/>
    </location>
</feature>
<feature type="disulfide bond" evidence="1">
    <location>
        <begin position="122"/>
        <end position="129"/>
    </location>
</feature>
<comment type="function">
    <text evidence="1">Does not exhibit any ribonuclease activity.</text>
</comment>
<comment type="subcellular location">
    <subcellularLocation>
        <location evidence="3">Secreted</location>
    </subcellularLocation>
</comment>
<comment type="similarity">
    <text evidence="3">Belongs to the pancreatic ribonuclease family.</text>
</comment>
<proteinExistence type="inferred from homology"/>
<sequence length="204" mass="24472">MMRTLITTHPLLLLLLLQQLLQPVQFQEVDTDFDSPDDDMEEFEEYLEEFHRTGPTRPPTKEKVERRVLIEPGMPLYDRNYCNEEIMRKNVYHKQRCVTEHYFLLMQYDELQKICYNRFVPCKNGVRKCNRSKGLVEGVYCNLTEAFEIPWCKYESFYRRGYVLITCTWQNEIQKLIPHTINDLVEPPEHRSFLNEDGVFVIPP</sequence>
<name>RNAS9_PAPAN</name>